<accession>B7JGP1</accession>
<gene>
    <name evidence="1" type="primary">glyA</name>
    <name type="ordered locus">BCAH820_5407</name>
</gene>
<organism>
    <name type="scientific">Bacillus cereus (strain AH820)</name>
    <dbReference type="NCBI Taxonomy" id="405535"/>
    <lineage>
        <taxon>Bacteria</taxon>
        <taxon>Bacillati</taxon>
        <taxon>Bacillota</taxon>
        <taxon>Bacilli</taxon>
        <taxon>Bacillales</taxon>
        <taxon>Bacillaceae</taxon>
        <taxon>Bacillus</taxon>
        <taxon>Bacillus cereus group</taxon>
    </lineage>
</organism>
<sequence length="413" mass="45164">MDHLKRQDEKVFAAIEAELGRQRSKIELIASENFVSEAVMEAQGSVLTNKYAEGYPGKRYYGGCEHVDVVEDIARDRVKEIFGAEHVNVQPHSGAQANMAVYFTILEQGDTVLGMNLSHGGHLTHGSPVNFSGVQYNFVEYGVDAESHRINYDDVLAKAKEHKPKLIVAGASAYPRVIDFKRFREIADEVGAYLMVDMAHIAGLVAAGLHPNPVPHAHFVTTTTHKTLRGPRGGMILCEEQFAKQIDKSIFPGIQGGPLMHVIAAKAVAFGEALQDDFKTYAQNIINNANRLAEGLQKEGLTLVSGGTDNHLILIDVRNLEITGKVAEHVLDEVGITVNKNTIPFETASPFVTSGVRIGTAAVTSRGFGLEDMDEIASLIAYTLKNHENEAALEEARKRVEALTSKFPMYTDL</sequence>
<evidence type="ECO:0000255" key="1">
    <source>
        <dbReference type="HAMAP-Rule" id="MF_00051"/>
    </source>
</evidence>
<name>GLYA_BACC0</name>
<dbReference type="EC" id="2.1.2.1" evidence="1"/>
<dbReference type="EMBL" id="CP001283">
    <property type="protein sequence ID" value="ACK88041.1"/>
    <property type="molecule type" value="Genomic_DNA"/>
</dbReference>
<dbReference type="RefSeq" id="WP_000349816.1">
    <property type="nucleotide sequence ID" value="NC_011773.1"/>
</dbReference>
<dbReference type="SMR" id="B7JGP1"/>
<dbReference type="GeneID" id="93005807"/>
<dbReference type="KEGG" id="bcu:BCAH820_5407"/>
<dbReference type="HOGENOM" id="CLU_022477_2_1_9"/>
<dbReference type="UniPathway" id="UPA00193"/>
<dbReference type="UniPathway" id="UPA00288">
    <property type="reaction ID" value="UER01023"/>
</dbReference>
<dbReference type="Proteomes" id="UP000001363">
    <property type="component" value="Chromosome"/>
</dbReference>
<dbReference type="GO" id="GO:0005829">
    <property type="term" value="C:cytosol"/>
    <property type="evidence" value="ECO:0007669"/>
    <property type="project" value="TreeGrafter"/>
</dbReference>
<dbReference type="GO" id="GO:0004372">
    <property type="term" value="F:glycine hydroxymethyltransferase activity"/>
    <property type="evidence" value="ECO:0007669"/>
    <property type="project" value="UniProtKB-UniRule"/>
</dbReference>
<dbReference type="GO" id="GO:0030170">
    <property type="term" value="F:pyridoxal phosphate binding"/>
    <property type="evidence" value="ECO:0007669"/>
    <property type="project" value="UniProtKB-UniRule"/>
</dbReference>
<dbReference type="GO" id="GO:0019264">
    <property type="term" value="P:glycine biosynthetic process from serine"/>
    <property type="evidence" value="ECO:0007669"/>
    <property type="project" value="UniProtKB-UniRule"/>
</dbReference>
<dbReference type="GO" id="GO:0035999">
    <property type="term" value="P:tetrahydrofolate interconversion"/>
    <property type="evidence" value="ECO:0007669"/>
    <property type="project" value="UniProtKB-UniRule"/>
</dbReference>
<dbReference type="CDD" id="cd00378">
    <property type="entry name" value="SHMT"/>
    <property type="match status" value="1"/>
</dbReference>
<dbReference type="FunFam" id="3.40.640.10:FF:000001">
    <property type="entry name" value="Serine hydroxymethyltransferase"/>
    <property type="match status" value="1"/>
</dbReference>
<dbReference type="FunFam" id="3.90.1150.10:FF:000003">
    <property type="entry name" value="Serine hydroxymethyltransferase"/>
    <property type="match status" value="1"/>
</dbReference>
<dbReference type="Gene3D" id="3.90.1150.10">
    <property type="entry name" value="Aspartate Aminotransferase, domain 1"/>
    <property type="match status" value="1"/>
</dbReference>
<dbReference type="Gene3D" id="3.40.640.10">
    <property type="entry name" value="Type I PLP-dependent aspartate aminotransferase-like (Major domain)"/>
    <property type="match status" value="1"/>
</dbReference>
<dbReference type="HAMAP" id="MF_00051">
    <property type="entry name" value="SHMT"/>
    <property type="match status" value="1"/>
</dbReference>
<dbReference type="InterPro" id="IPR015424">
    <property type="entry name" value="PyrdxlP-dep_Trfase"/>
</dbReference>
<dbReference type="InterPro" id="IPR015421">
    <property type="entry name" value="PyrdxlP-dep_Trfase_major"/>
</dbReference>
<dbReference type="InterPro" id="IPR015422">
    <property type="entry name" value="PyrdxlP-dep_Trfase_small"/>
</dbReference>
<dbReference type="InterPro" id="IPR001085">
    <property type="entry name" value="Ser_HO-MeTrfase"/>
</dbReference>
<dbReference type="InterPro" id="IPR049943">
    <property type="entry name" value="Ser_HO-MeTrfase-like"/>
</dbReference>
<dbReference type="InterPro" id="IPR019798">
    <property type="entry name" value="Ser_HO-MeTrfase_PLP_BS"/>
</dbReference>
<dbReference type="InterPro" id="IPR039429">
    <property type="entry name" value="SHMT-like_dom"/>
</dbReference>
<dbReference type="NCBIfam" id="NF000586">
    <property type="entry name" value="PRK00011.1"/>
    <property type="match status" value="1"/>
</dbReference>
<dbReference type="PANTHER" id="PTHR11680">
    <property type="entry name" value="SERINE HYDROXYMETHYLTRANSFERASE"/>
    <property type="match status" value="1"/>
</dbReference>
<dbReference type="PANTHER" id="PTHR11680:SF35">
    <property type="entry name" value="SERINE HYDROXYMETHYLTRANSFERASE 1"/>
    <property type="match status" value="1"/>
</dbReference>
<dbReference type="Pfam" id="PF00464">
    <property type="entry name" value="SHMT"/>
    <property type="match status" value="1"/>
</dbReference>
<dbReference type="PIRSF" id="PIRSF000412">
    <property type="entry name" value="SHMT"/>
    <property type="match status" value="1"/>
</dbReference>
<dbReference type="SUPFAM" id="SSF53383">
    <property type="entry name" value="PLP-dependent transferases"/>
    <property type="match status" value="1"/>
</dbReference>
<dbReference type="PROSITE" id="PS00096">
    <property type="entry name" value="SHMT"/>
    <property type="match status" value="1"/>
</dbReference>
<feature type="chain" id="PRO_1000116818" description="Serine hydroxymethyltransferase">
    <location>
        <begin position="1"/>
        <end position="413"/>
    </location>
</feature>
<feature type="binding site" evidence="1">
    <location>
        <position position="117"/>
    </location>
    <ligand>
        <name>(6S)-5,6,7,8-tetrahydrofolate</name>
        <dbReference type="ChEBI" id="CHEBI:57453"/>
    </ligand>
</feature>
<feature type="binding site" evidence="1">
    <location>
        <begin position="121"/>
        <end position="123"/>
    </location>
    <ligand>
        <name>(6S)-5,6,7,8-tetrahydrofolate</name>
        <dbReference type="ChEBI" id="CHEBI:57453"/>
    </ligand>
</feature>
<feature type="binding site" evidence="1">
    <location>
        <position position="239"/>
    </location>
    <ligand>
        <name>(6S)-5,6,7,8-tetrahydrofolate</name>
        <dbReference type="ChEBI" id="CHEBI:57453"/>
    </ligand>
</feature>
<feature type="binding site" evidence="1">
    <location>
        <begin position="349"/>
        <end position="351"/>
    </location>
    <ligand>
        <name>(6S)-5,6,7,8-tetrahydrofolate</name>
        <dbReference type="ChEBI" id="CHEBI:57453"/>
    </ligand>
</feature>
<feature type="site" description="Plays an important role in substrate specificity" evidence="1">
    <location>
        <position position="225"/>
    </location>
</feature>
<feature type="modified residue" description="N6-(pyridoxal phosphate)lysine" evidence="1">
    <location>
        <position position="226"/>
    </location>
</feature>
<keyword id="KW-0028">Amino-acid biosynthesis</keyword>
<keyword id="KW-0963">Cytoplasm</keyword>
<keyword id="KW-0554">One-carbon metabolism</keyword>
<keyword id="KW-0663">Pyridoxal phosphate</keyword>
<keyword id="KW-0808">Transferase</keyword>
<reference key="1">
    <citation type="submission" date="2008-10" db="EMBL/GenBank/DDBJ databases">
        <title>Genome sequence of Bacillus cereus AH820.</title>
        <authorList>
            <person name="Dodson R.J."/>
            <person name="Durkin A.S."/>
            <person name="Rosovitz M.J."/>
            <person name="Rasko D.A."/>
            <person name="Hoffmaster A."/>
            <person name="Ravel J."/>
            <person name="Sutton G."/>
        </authorList>
    </citation>
    <scope>NUCLEOTIDE SEQUENCE [LARGE SCALE GENOMIC DNA]</scope>
    <source>
        <strain>AH820</strain>
    </source>
</reference>
<proteinExistence type="inferred from homology"/>
<protein>
    <recommendedName>
        <fullName evidence="1">Serine hydroxymethyltransferase</fullName>
        <shortName evidence="1">SHMT</shortName>
        <shortName evidence="1">Serine methylase</shortName>
        <ecNumber evidence="1">2.1.2.1</ecNumber>
    </recommendedName>
</protein>
<comment type="function">
    <text evidence="1">Catalyzes the reversible interconversion of serine and glycine with tetrahydrofolate (THF) serving as the one-carbon carrier. This reaction serves as the major source of one-carbon groups required for the biosynthesis of purines, thymidylate, methionine, and other important biomolecules. Also exhibits THF-independent aldolase activity toward beta-hydroxyamino acids, producing glycine and aldehydes, via a retro-aldol mechanism.</text>
</comment>
<comment type="catalytic activity">
    <reaction evidence="1">
        <text>(6R)-5,10-methylene-5,6,7,8-tetrahydrofolate + glycine + H2O = (6S)-5,6,7,8-tetrahydrofolate + L-serine</text>
        <dbReference type="Rhea" id="RHEA:15481"/>
        <dbReference type="ChEBI" id="CHEBI:15377"/>
        <dbReference type="ChEBI" id="CHEBI:15636"/>
        <dbReference type="ChEBI" id="CHEBI:33384"/>
        <dbReference type="ChEBI" id="CHEBI:57305"/>
        <dbReference type="ChEBI" id="CHEBI:57453"/>
        <dbReference type="EC" id="2.1.2.1"/>
    </reaction>
</comment>
<comment type="cofactor">
    <cofactor evidence="1">
        <name>pyridoxal 5'-phosphate</name>
        <dbReference type="ChEBI" id="CHEBI:597326"/>
    </cofactor>
</comment>
<comment type="pathway">
    <text evidence="1">One-carbon metabolism; tetrahydrofolate interconversion.</text>
</comment>
<comment type="pathway">
    <text evidence="1">Amino-acid biosynthesis; glycine biosynthesis; glycine from L-serine: step 1/1.</text>
</comment>
<comment type="subunit">
    <text evidence="1">Homodimer.</text>
</comment>
<comment type="subcellular location">
    <subcellularLocation>
        <location evidence="1">Cytoplasm</location>
    </subcellularLocation>
</comment>
<comment type="similarity">
    <text evidence="1">Belongs to the SHMT family.</text>
</comment>